<name>FBID_MYCMM</name>
<accession>B2HII6</accession>
<sequence>MSGIRADGTGDVGLIIAVKRLGAAKTRLAPVFSAAARESVVLAMLMDTLTAAARVGDLRSITVITPDESAAAAATELGAEVLADPTRQGDPDPLNNAILTAEQVVSGSVPNIVVLQGDLPAMQTQELADAICAARAHQRSFVADRLGTGTAALCAFGSALDPQFGPDSSARHRRSGAVELTGAWPGLRCDVDTPADLAAARSLGVGPATARVVAHHR</sequence>
<proteinExistence type="inferred from homology"/>
<comment type="function">
    <text evidence="1">Guanylyltransferase that catalyzes the activation of phosphoenolpyruvate (PEP) as enolpyruvoyl-2-diphospho-5'-guanosine, via the condensation of PEP with GTP. It is involved in the biosynthesis of coenzyme F420, a hydride carrier cofactor.</text>
</comment>
<comment type="catalytic activity">
    <reaction evidence="1">
        <text>phosphoenolpyruvate + GTP + H(+) = enolpyruvoyl-2-diphospho-5'-guanosine + diphosphate</text>
        <dbReference type="Rhea" id="RHEA:30519"/>
        <dbReference type="ChEBI" id="CHEBI:15378"/>
        <dbReference type="ChEBI" id="CHEBI:33019"/>
        <dbReference type="ChEBI" id="CHEBI:37565"/>
        <dbReference type="ChEBI" id="CHEBI:58702"/>
        <dbReference type="ChEBI" id="CHEBI:143701"/>
        <dbReference type="EC" id="2.7.7.105"/>
    </reaction>
</comment>
<comment type="pathway">
    <text evidence="1">Cofactor biosynthesis; coenzyme F420 biosynthesis.</text>
</comment>
<comment type="similarity">
    <text evidence="1">Belongs to the CofC family.</text>
</comment>
<evidence type="ECO:0000255" key="1">
    <source>
        <dbReference type="HAMAP-Rule" id="MF_02114"/>
    </source>
</evidence>
<keyword id="KW-0342">GTP-binding</keyword>
<keyword id="KW-0547">Nucleotide-binding</keyword>
<keyword id="KW-0548">Nucleotidyltransferase</keyword>
<keyword id="KW-1185">Reference proteome</keyword>
<keyword id="KW-0808">Transferase</keyword>
<reference key="1">
    <citation type="journal article" date="2008" name="Genome Res.">
        <title>Insights from the complete genome sequence of Mycobacterium marinum on the evolution of Mycobacterium tuberculosis.</title>
        <authorList>
            <person name="Stinear T.P."/>
            <person name="Seemann T."/>
            <person name="Harrison P.F."/>
            <person name="Jenkin G.A."/>
            <person name="Davies J.K."/>
            <person name="Johnson P.D."/>
            <person name="Abdellah Z."/>
            <person name="Arrowsmith C."/>
            <person name="Chillingworth T."/>
            <person name="Churcher C."/>
            <person name="Clarke K."/>
            <person name="Cronin A."/>
            <person name="Davis P."/>
            <person name="Goodhead I."/>
            <person name="Holroyd N."/>
            <person name="Jagels K."/>
            <person name="Lord A."/>
            <person name="Moule S."/>
            <person name="Mungall K."/>
            <person name="Norbertczak H."/>
            <person name="Quail M.A."/>
            <person name="Rabbinowitsch E."/>
            <person name="Walker D."/>
            <person name="White B."/>
            <person name="Whitehead S."/>
            <person name="Small P.L."/>
            <person name="Brosch R."/>
            <person name="Ramakrishnan L."/>
            <person name="Fischbach M.A."/>
            <person name="Parkhill J."/>
            <person name="Cole S.T."/>
        </authorList>
    </citation>
    <scope>NUCLEOTIDE SEQUENCE [LARGE SCALE GENOMIC DNA]</scope>
    <source>
        <strain>ATCC BAA-535 / M</strain>
    </source>
</reference>
<feature type="chain" id="PRO_0000398693" description="Phosphoenolpyruvate guanylyltransferase">
    <location>
        <begin position="1"/>
        <end position="217"/>
    </location>
</feature>
<feature type="binding site" evidence="1">
    <location>
        <position position="150"/>
    </location>
    <ligand>
        <name>phosphoenolpyruvate</name>
        <dbReference type="ChEBI" id="CHEBI:58702"/>
    </ligand>
</feature>
<feature type="binding site" evidence="1">
    <location>
        <position position="165"/>
    </location>
    <ligand>
        <name>phosphoenolpyruvate</name>
        <dbReference type="ChEBI" id="CHEBI:58702"/>
    </ligand>
</feature>
<feature type="binding site" evidence="1">
    <location>
        <position position="168"/>
    </location>
    <ligand>
        <name>phosphoenolpyruvate</name>
        <dbReference type="ChEBI" id="CHEBI:58702"/>
    </ligand>
</feature>
<protein>
    <recommendedName>
        <fullName evidence="1">Phosphoenolpyruvate guanylyltransferase</fullName>
        <shortName evidence="1">PEP guanylyltransferase</shortName>
        <ecNumber evidence="1">2.7.7.105</ecNumber>
    </recommendedName>
</protein>
<dbReference type="EC" id="2.7.7.105" evidence="1"/>
<dbReference type="EMBL" id="CP000854">
    <property type="protein sequence ID" value="ACC40180.1"/>
    <property type="molecule type" value="Genomic_DNA"/>
</dbReference>
<dbReference type="RefSeq" id="WP_012393543.1">
    <property type="nucleotide sequence ID" value="NC_010612.1"/>
</dbReference>
<dbReference type="SMR" id="B2HII6"/>
<dbReference type="STRING" id="216594.MMAR_1731"/>
<dbReference type="GeneID" id="93436309"/>
<dbReference type="KEGG" id="mmi:MMAR_1731"/>
<dbReference type="eggNOG" id="COG1920">
    <property type="taxonomic scope" value="Bacteria"/>
</dbReference>
<dbReference type="HOGENOM" id="CLU_076569_0_0_11"/>
<dbReference type="OrthoDB" id="9151145at2"/>
<dbReference type="UniPathway" id="UPA00071"/>
<dbReference type="Proteomes" id="UP000001190">
    <property type="component" value="Chromosome"/>
</dbReference>
<dbReference type="GO" id="GO:0005525">
    <property type="term" value="F:GTP binding"/>
    <property type="evidence" value="ECO:0007669"/>
    <property type="project" value="UniProtKB-KW"/>
</dbReference>
<dbReference type="GO" id="GO:0043814">
    <property type="term" value="F:phospholactate guanylyltransferase activity"/>
    <property type="evidence" value="ECO:0007669"/>
    <property type="project" value="InterPro"/>
</dbReference>
<dbReference type="GO" id="GO:0052645">
    <property type="term" value="P:F420-0 metabolic process"/>
    <property type="evidence" value="ECO:0007669"/>
    <property type="project" value="UniProtKB-UniRule"/>
</dbReference>
<dbReference type="Gene3D" id="3.90.550.10">
    <property type="entry name" value="Spore Coat Polysaccharide Biosynthesis Protein SpsA, Chain A"/>
    <property type="match status" value="1"/>
</dbReference>
<dbReference type="HAMAP" id="MF_02114">
    <property type="entry name" value="CofC"/>
    <property type="match status" value="1"/>
</dbReference>
<dbReference type="InterPro" id="IPR002835">
    <property type="entry name" value="CofC"/>
</dbReference>
<dbReference type="InterPro" id="IPR029044">
    <property type="entry name" value="Nucleotide-diphossugar_trans"/>
</dbReference>
<dbReference type="NCBIfam" id="TIGR03552">
    <property type="entry name" value="F420_cofC"/>
    <property type="match status" value="1"/>
</dbReference>
<dbReference type="PANTHER" id="PTHR40392">
    <property type="entry name" value="2-PHOSPHO-L-LACTATE GUANYLYLTRANSFERASE"/>
    <property type="match status" value="1"/>
</dbReference>
<dbReference type="PANTHER" id="PTHR40392:SF1">
    <property type="entry name" value="2-PHOSPHO-L-LACTATE GUANYLYLTRANSFERASE"/>
    <property type="match status" value="1"/>
</dbReference>
<dbReference type="Pfam" id="PF01983">
    <property type="entry name" value="CofC"/>
    <property type="match status" value="1"/>
</dbReference>
<dbReference type="SUPFAM" id="SSF53448">
    <property type="entry name" value="Nucleotide-diphospho-sugar transferases"/>
    <property type="match status" value="1"/>
</dbReference>
<gene>
    <name evidence="1" type="primary">fbiD</name>
    <name type="ordered locus">MMAR_1731</name>
</gene>
<organism>
    <name type="scientific">Mycobacterium marinum (strain ATCC BAA-535 / M)</name>
    <dbReference type="NCBI Taxonomy" id="216594"/>
    <lineage>
        <taxon>Bacteria</taxon>
        <taxon>Bacillati</taxon>
        <taxon>Actinomycetota</taxon>
        <taxon>Actinomycetes</taxon>
        <taxon>Mycobacteriales</taxon>
        <taxon>Mycobacteriaceae</taxon>
        <taxon>Mycobacterium</taxon>
        <taxon>Mycobacterium ulcerans group</taxon>
    </lineage>
</organism>